<keyword id="KW-0002">3D-structure</keyword>
<keyword id="KW-0121">Carboxypeptidase</keyword>
<keyword id="KW-0997">Cell inner membrane</keyword>
<keyword id="KW-1003">Cell membrane</keyword>
<keyword id="KW-0133">Cell shape</keyword>
<keyword id="KW-0961">Cell wall biogenesis/degradation</keyword>
<keyword id="KW-0903">Direct protein sequencing</keyword>
<keyword id="KW-0378">Hydrolase</keyword>
<keyword id="KW-0472">Membrane</keyword>
<keyword id="KW-0573">Peptidoglycan synthesis</keyword>
<keyword id="KW-0645">Protease</keyword>
<keyword id="KW-1185">Reference proteome</keyword>
<keyword id="KW-0812">Transmembrane</keyword>
<keyword id="KW-1133">Transmembrane helix</keyword>
<protein>
    <recommendedName>
        <fullName evidence="1 15">Peptidoglycan D,D-transpeptidase MrdA</fullName>
        <ecNumber evidence="1 4 5">3.4.16.4</ecNumber>
    </recommendedName>
    <alternativeName>
        <fullName evidence="13">Class B penicillin-binding protein 2</fullName>
    </alternativeName>
    <alternativeName>
        <fullName evidence="1 9 10 11 13">Penicillin-binding protein 2</fullName>
        <shortName evidence="1 10">PBP-2</shortName>
        <shortName evidence="11 13">PBP2</shortName>
    </alternativeName>
    <alternativeName>
        <fullName evidence="13">Transpeptidase PBP2</fullName>
        <shortName evidence="13">TP PBP2</shortName>
    </alternativeName>
</protein>
<evidence type="ECO:0000255" key="1">
    <source>
        <dbReference type="HAMAP-Rule" id="MF_02081"/>
    </source>
</evidence>
<evidence type="ECO:0000269" key="2">
    <source>
    </source>
</evidence>
<evidence type="ECO:0000269" key="3">
    <source>
    </source>
</evidence>
<evidence type="ECO:0000269" key="4">
    <source>
    </source>
</evidence>
<evidence type="ECO:0000269" key="5">
    <source>
    </source>
</evidence>
<evidence type="ECO:0000269" key="6">
    <source>
    </source>
</evidence>
<evidence type="ECO:0000269" key="7">
    <source>
    </source>
</evidence>
<evidence type="ECO:0000269" key="8">
    <source>
    </source>
</evidence>
<evidence type="ECO:0000303" key="9">
    <source>
    </source>
</evidence>
<evidence type="ECO:0000303" key="10">
    <source>
    </source>
</evidence>
<evidence type="ECO:0000303" key="11">
    <source>
    </source>
</evidence>
<evidence type="ECO:0000303" key="12">
    <source>
    </source>
</evidence>
<evidence type="ECO:0000303" key="13">
    <source>
    </source>
</evidence>
<evidence type="ECO:0000303" key="14">
    <source>
    </source>
</evidence>
<evidence type="ECO:0000305" key="15"/>
<evidence type="ECO:0000305" key="16">
    <source>
    </source>
</evidence>
<evidence type="ECO:0000305" key="17">
    <source>
    </source>
</evidence>
<evidence type="ECO:0007744" key="18">
    <source>
        <dbReference type="PDB" id="6G9F"/>
    </source>
</evidence>
<evidence type="ECO:0007744" key="19">
    <source>
        <dbReference type="PDB" id="6G9P"/>
    </source>
</evidence>
<evidence type="ECO:0007744" key="20">
    <source>
        <dbReference type="PDB" id="6G9S"/>
    </source>
</evidence>
<evidence type="ECO:0007744" key="21">
    <source>
        <dbReference type="PDB" id="8TJ3"/>
    </source>
</evidence>
<evidence type="ECO:0007829" key="22">
    <source>
        <dbReference type="PDB" id="6G9F"/>
    </source>
</evidence>
<evidence type="ECO:0007829" key="23">
    <source>
        <dbReference type="PDB" id="6G9S"/>
    </source>
</evidence>
<evidence type="ECO:0007829" key="24">
    <source>
        <dbReference type="PDB" id="8TJ3"/>
    </source>
</evidence>
<organism>
    <name type="scientific">Escherichia coli (strain K12)</name>
    <dbReference type="NCBI Taxonomy" id="83333"/>
    <lineage>
        <taxon>Bacteria</taxon>
        <taxon>Pseudomonadati</taxon>
        <taxon>Pseudomonadota</taxon>
        <taxon>Gammaproteobacteria</taxon>
        <taxon>Enterobacterales</taxon>
        <taxon>Enterobacteriaceae</taxon>
        <taxon>Escherichia</taxon>
    </lineage>
</organism>
<reference key="1">
    <citation type="journal article" date="1986" name="Eur. J. Biochem.">
        <title>Nucleotide sequence of the pbpA gene and characteristics of the deduced amino acid sequence of penicillin-binding protein 2 of Escherichia coli K12.</title>
        <authorList>
            <person name="Asoh S."/>
            <person name="Matsuzawa H."/>
            <person name="Ishino F."/>
            <person name="Strominger J.L."/>
            <person name="Matsuhashi M."/>
            <person name="Ohta T."/>
        </authorList>
    </citation>
    <scope>NUCLEOTIDE SEQUENCE [GENOMIC DNA]</scope>
    <scope>PROTEIN SEQUENCE OF 1-18</scope>
    <source>
        <strain>K12</strain>
    </source>
</reference>
<reference key="2">
    <citation type="journal article" date="1996" name="DNA Res.">
        <title>A 718-kb DNA sequence of the Escherichia coli K-12 genome corresponding to the 12.7-28.0 min region on the linkage map.</title>
        <authorList>
            <person name="Oshima T."/>
            <person name="Aiba H."/>
            <person name="Baba T."/>
            <person name="Fujita K."/>
            <person name="Hayashi K."/>
            <person name="Honjo A."/>
            <person name="Ikemoto K."/>
            <person name="Inada T."/>
            <person name="Itoh T."/>
            <person name="Kajihara M."/>
            <person name="Kanai K."/>
            <person name="Kashimoto K."/>
            <person name="Kimura S."/>
            <person name="Kitagawa M."/>
            <person name="Makino K."/>
            <person name="Masuda S."/>
            <person name="Miki T."/>
            <person name="Mizobuchi K."/>
            <person name="Mori H."/>
            <person name="Motomura K."/>
            <person name="Nakamura Y."/>
            <person name="Nashimoto H."/>
            <person name="Nishio Y."/>
            <person name="Saito N."/>
            <person name="Sampei G."/>
            <person name="Seki Y."/>
            <person name="Tagami H."/>
            <person name="Takemoto K."/>
            <person name="Wada C."/>
            <person name="Yamamoto Y."/>
            <person name="Yano M."/>
            <person name="Horiuchi T."/>
        </authorList>
    </citation>
    <scope>NUCLEOTIDE SEQUENCE [LARGE SCALE GENOMIC DNA]</scope>
    <source>
        <strain>K12 / W3110 / ATCC 27325 / DSM 5911</strain>
    </source>
</reference>
<reference key="3">
    <citation type="submission" date="1997-01" db="EMBL/GenBank/DDBJ databases">
        <title>Sequence of minutes 4-25 of Escherichia coli.</title>
        <authorList>
            <person name="Chung E."/>
            <person name="Allen E."/>
            <person name="Araujo R."/>
            <person name="Aparicio A.M."/>
            <person name="Davis K."/>
            <person name="Duncan M."/>
            <person name="Federspiel N."/>
            <person name="Hyman R."/>
            <person name="Kalman S."/>
            <person name="Komp C."/>
            <person name="Kurdi O."/>
            <person name="Lew H."/>
            <person name="Lin D."/>
            <person name="Namath A."/>
            <person name="Oefner P."/>
            <person name="Roberts D."/>
            <person name="Schramm S."/>
            <person name="Davis R.W."/>
        </authorList>
    </citation>
    <scope>NUCLEOTIDE SEQUENCE [LARGE SCALE GENOMIC DNA]</scope>
    <source>
        <strain>K12 / MG1655 / ATCC 47076</strain>
    </source>
</reference>
<reference key="4">
    <citation type="journal article" date="1997" name="Science">
        <title>The complete genome sequence of Escherichia coli K-12.</title>
        <authorList>
            <person name="Blattner F.R."/>
            <person name="Plunkett G. III"/>
            <person name="Bloch C.A."/>
            <person name="Perna N.T."/>
            <person name="Burland V."/>
            <person name="Riley M."/>
            <person name="Collado-Vides J."/>
            <person name="Glasner J.D."/>
            <person name="Rode C.K."/>
            <person name="Mayhew G.F."/>
            <person name="Gregor J."/>
            <person name="Davis N.W."/>
            <person name="Kirkpatrick H.A."/>
            <person name="Goeden M.A."/>
            <person name="Rose D.J."/>
            <person name="Mau B."/>
            <person name="Shao Y."/>
        </authorList>
    </citation>
    <scope>NUCLEOTIDE SEQUENCE [LARGE SCALE GENOMIC DNA]</scope>
    <source>
        <strain>K12 / MG1655 / ATCC 47076</strain>
    </source>
</reference>
<reference key="5">
    <citation type="journal article" date="2006" name="Mol. Syst. Biol.">
        <title>Highly accurate genome sequences of Escherichia coli K-12 strains MG1655 and W3110.</title>
        <authorList>
            <person name="Hayashi K."/>
            <person name="Morooka N."/>
            <person name="Yamamoto Y."/>
            <person name="Fujita K."/>
            <person name="Isono K."/>
            <person name="Choi S."/>
            <person name="Ohtsubo E."/>
            <person name="Baba T."/>
            <person name="Wanner B.L."/>
            <person name="Mori H."/>
            <person name="Horiuchi T."/>
        </authorList>
    </citation>
    <scope>NUCLEOTIDE SEQUENCE [LARGE SCALE GENOMIC DNA]</scope>
    <source>
        <strain>K12 / W3110 / ATCC 27325 / DSM 5911</strain>
    </source>
</reference>
<reference key="6">
    <citation type="journal article" date="1988" name="J. Biochem.">
        <title>Identification of the penicillin-binding active site of penicillin-binding protein 2 of Escherichia coli.</title>
        <authorList>
            <person name="Takasuga A."/>
            <person name="Adachi H."/>
            <person name="Ishino F."/>
            <person name="Matsuhashi M."/>
            <person name="Ohta T."/>
            <person name="Matsuzawa H."/>
        </authorList>
    </citation>
    <scope>PROTEIN SEQUENCE OF 321-334 AND 633</scope>
    <scope>ACTIVE SITE</scope>
    <scope>PENICILLIN-BINDING</scope>
    <scope>MUTAGENESIS OF SER-330</scope>
</reference>
<reference key="7">
    <citation type="journal article" date="1989" name="J. Bacteriol.">
        <title>Nucleotide sequence of the rodA gene, responsible for the rod shape of Escherichia coli: rodA and the pbpA gene, encoding penicillin-binding protein 2, constitute the rodA operon.</title>
        <authorList>
            <person name="Matsuzawa H."/>
            <person name="Asoh S."/>
            <person name="Kunai K."/>
            <person name="Muraiso K."/>
            <person name="Takasuga A."/>
            <person name="Ohta T."/>
        </authorList>
    </citation>
    <scope>NUCLEOTIDE SEQUENCE [GENOMIC DNA] OF 606-633</scope>
    <source>
        <strain>K12</strain>
    </source>
</reference>
<reference key="8">
    <citation type="journal article" date="1975" name="Proc. Natl. Acad. Sci. U.S.A.">
        <title>Distinct penicillin binding proteins involved in the division, elongation, and shape of Escherichia coli K12.</title>
        <authorList>
            <person name="Spratt B.G."/>
        </authorList>
    </citation>
    <scope>FUNCTION</scope>
    <scope>SUBCELLULAR LOCATION</scope>
    <scope>ACTIVITY REGULATION</scope>
    <source>
        <strain>K12</strain>
    </source>
</reference>
<reference key="9">
    <citation type="journal article" date="1985" name="J. Bacteriol.">
        <title>Cell shape and division in Escherichia coli: experiments with shape and division mutants.</title>
        <authorList>
            <person name="Begg K.J."/>
            <person name="Donachie W.D."/>
        </authorList>
    </citation>
    <scope>DISRUPTION PHENOTYPE</scope>
</reference>
<reference key="10">
    <citation type="journal article" date="1986" name="J. Biol. Chem.">
        <title>Peptidoglycan synthetic activities in membranes of Escherichia coli caused by overproduction of penicillin-binding protein 2 and rodA protein.</title>
        <authorList>
            <person name="Ishino F."/>
            <person name="Park W."/>
            <person name="Tomioka S."/>
            <person name="Tamaki S."/>
            <person name="Takase I."/>
            <person name="Kunugita K."/>
            <person name="Matsuzawa H."/>
            <person name="Asoh S."/>
            <person name="Ohta T."/>
            <person name="Spratt B.G."/>
        </authorList>
    </citation>
    <scope>FUNCTION</scope>
    <scope>CATALYTIC ACTIVITY</scope>
    <scope>ACTIVITY REGULATION</scope>
    <scope>PATHWAY</scope>
    <scope>SUBCELLULAR LOCATION</scope>
</reference>
<reference key="11">
    <citation type="journal article" date="2003" name="Mol. Microbiol.">
        <title>Penicillin-binding protein PBP2 of Escherichia coli localizes preferentially in the lateral wall and at mid-cell in comparison with the old cell pole.</title>
        <authorList>
            <person name="Den Blaauwen T."/>
            <person name="Aarsman M.E."/>
            <person name="Vischer N.O."/>
            <person name="Nanninga N."/>
        </authorList>
    </citation>
    <scope>FUNCTION</scope>
    <scope>SUBCELLULAR LOCATION</scope>
</reference>
<reference evidence="18 19 20" key="12">
    <citation type="journal article" date="2019" name="J. Med. Chem.">
        <title>Structural Basis for E. coli Penicillin Binding Protein (PBP) 2 Inhibition, a Platform for Drug Design.</title>
        <authorList>
            <person name="Levy N."/>
            <person name="Bruneau J.M."/>
            <person name="Le Rouzic E."/>
            <person name="Bonnard D."/>
            <person name="Le Strat F."/>
            <person name="Caravano A."/>
            <person name="Chevreuil F."/>
            <person name="Barbion J."/>
            <person name="Chasset S."/>
            <person name="Ledoussal B."/>
            <person name="Moreau F."/>
            <person name="Ruff M."/>
        </authorList>
    </citation>
    <scope>X-RAY CRYSTALLOGRAPHY (2.00 ANGSTROMS) OF 52-633 AND IN COMPLEXES WITH DIAZABICYCLOOCTANE INHIBITORS AVIBACTAM AND CPD4</scope>
    <scope>CATALYTIC ACTIVITY</scope>
    <scope>ACTIVITY REGULATION</scope>
    <scope>PATHWAY</scope>
    <scope>ACTIVE SITE</scope>
    <source>
        <strain evidence="11">K12</strain>
    </source>
</reference>
<reference evidence="21" key="13">
    <citation type="journal article" date="2023" name="Nat. Commun.">
        <title>Structural basis of peptidoglycan synthesis by E. coli RodA-PBP2 complex.</title>
        <authorList>
            <person name="Nygaard R."/>
            <person name="Graham C.L.B."/>
            <person name="Belcher Dufrisne M."/>
            <person name="Colburn J.D."/>
            <person name="Pepe J."/>
            <person name="Hydorn M.A."/>
            <person name="Corradi S."/>
            <person name="Brown C.M."/>
            <person name="Ashraf K.U."/>
            <person name="Vickery O.N."/>
            <person name="Briggs N.S."/>
            <person name="Deering J.J."/>
            <person name="Kloss B."/>
            <person name="Botta B."/>
            <person name="Clarke O.B."/>
            <person name="Columbus L."/>
            <person name="Dworkin J."/>
            <person name="Stansfeld P.J."/>
            <person name="Roper D.I."/>
            <person name="Mancia F."/>
        </authorList>
    </citation>
    <scope>STRUCTURE BY ELECTRON MICROSCOPY (3.20 ANGSTROMS) OF FUSION CONSTRUCT OF MRDA AND MRDB/RODA</scope>
    <scope>PATHWAY</scope>
    <scope>SUBCELLULAR LOCATION</scope>
    <scope>TOPOLOGY</scope>
    <scope>ACTIVE SITE</scope>
    <scope>MUTAGENESIS OF SER-330</scope>
</reference>
<accession>P0AD65</accession>
<accession>P08150</accession>
<gene>
    <name evidence="1 10" type="primary">mrdA</name>
    <name evidence="12 14" type="synonym">pbpA</name>
    <name type="ordered locus">b0635</name>
    <name type="ordered locus">JW0630</name>
</gene>
<sequence>MKLQNSFRDYTAESALFVRRALVAFLGILLLTGVLIANLYNLQIVRFTDYQTRSNENRIKLVPIAPSRGIIYDRNGIPLALNRTIYQIEMMPEKVDNVQQTLDALRSVVDLTDDDIAAFRKERARSHRFTSIPVKTNLTEVQVARFAVNQYRFPGVEVKGYKRRYYPYGSALTHVIGYVSKINDKDVERLNNDGKLANYAATHDIGKLGIERYYEDVLHGQTGYEEVEVNNRGRVIRQLKEVPPQAGHDIYLTLDLKLQQYIETLLAGSRAAVVVTDPRTGGVLALVSTPSYDPNLFVDGISSKDYSALLNDPNTPLVNRATQGVYPPASTVKPYVAVSALSAGVITRNTTLFDPGWWQLPGSEKRYRDWKKWGHGRLNVTRSLEESADTFFYQVAYDMGIDRLSEWMGKFGYGHYTGIDLAEERSGNMPTREWKQKRFKKPWYQGDTIPVGIGQGYWTATPIQMSKALMILINDGIVKVPHLLMSTAEDGKQVPWVQPHEPPVGDIHSGYWELAKDGMYGVANRPNGTAHKYFASAPYKIAAKSGTAQVFGLKANETYNAHKIAERLRDHKLMTAFAPYNNPQVAVAMILENGGAGPAVGTLMRQILDHIMLGDNNTDLPAENPAVAAAEDH</sequence>
<name>MRDA_ECOLI</name>
<dbReference type="EC" id="3.4.16.4" evidence="1 4 5"/>
<dbReference type="EMBL" id="X04516">
    <property type="protein sequence ID" value="CAA28201.1"/>
    <property type="molecule type" value="Genomic_DNA"/>
</dbReference>
<dbReference type="EMBL" id="U82598">
    <property type="protein sequence ID" value="AAB40835.1"/>
    <property type="molecule type" value="Genomic_DNA"/>
</dbReference>
<dbReference type="EMBL" id="U00096">
    <property type="protein sequence ID" value="AAC73736.1"/>
    <property type="molecule type" value="Genomic_DNA"/>
</dbReference>
<dbReference type="EMBL" id="AP009048">
    <property type="protein sequence ID" value="BAA35282.1"/>
    <property type="molecule type" value="Genomic_DNA"/>
</dbReference>
<dbReference type="EMBL" id="M22857">
    <property type="protein sequence ID" value="AAA24570.1"/>
    <property type="molecule type" value="Genomic_DNA"/>
</dbReference>
<dbReference type="PIR" id="C24995">
    <property type="entry name" value="ZPECP2"/>
</dbReference>
<dbReference type="RefSeq" id="NP_415168.1">
    <property type="nucleotide sequence ID" value="NC_000913.3"/>
</dbReference>
<dbReference type="RefSeq" id="WP_000776191.1">
    <property type="nucleotide sequence ID" value="NZ_STEB01000031.1"/>
</dbReference>
<dbReference type="PDB" id="6G9F">
    <property type="method" value="X-ray"/>
    <property type="resolution" value="2.35 A"/>
    <property type="chains" value="A=57-615"/>
</dbReference>
<dbReference type="PDB" id="6G9P">
    <property type="method" value="X-ray"/>
    <property type="resolution" value="2.10 A"/>
    <property type="chains" value="A=52-633"/>
</dbReference>
<dbReference type="PDB" id="6G9S">
    <property type="method" value="X-ray"/>
    <property type="resolution" value="2.00 A"/>
    <property type="chains" value="A=52-633"/>
</dbReference>
<dbReference type="PDB" id="8TJ3">
    <property type="method" value="EM"/>
    <property type="resolution" value="3.20 A"/>
    <property type="chains" value="C=1-633"/>
</dbReference>
<dbReference type="PDBsum" id="6G9F"/>
<dbReference type="PDBsum" id="6G9P"/>
<dbReference type="PDBsum" id="6G9S"/>
<dbReference type="PDBsum" id="8TJ3"/>
<dbReference type="SMR" id="P0AD65"/>
<dbReference type="BioGRID" id="4259912">
    <property type="interactions" value="574"/>
</dbReference>
<dbReference type="ComplexPortal" id="CPX-5718">
    <property type="entry name" value="Elongasome complex"/>
</dbReference>
<dbReference type="DIP" id="DIP-48190N"/>
<dbReference type="FunCoup" id="P0AD65">
    <property type="interactions" value="507"/>
</dbReference>
<dbReference type="IntAct" id="P0AD65">
    <property type="interactions" value="6"/>
</dbReference>
<dbReference type="STRING" id="511145.b0635"/>
<dbReference type="ChEMBL" id="CHEMBL1840"/>
<dbReference type="ChEMBL" id="CHEMBL2354313"/>
<dbReference type="DrugBank" id="DB01163">
    <property type="generic name" value="Amdinocillin"/>
</dbReference>
<dbReference type="DrugBank" id="DB01602">
    <property type="generic name" value="Bacampicillin"/>
</dbReference>
<dbReference type="DrugBank" id="DB00578">
    <property type="generic name" value="Carbenicillin"/>
</dbReference>
<dbReference type="DrugBank" id="DB09319">
    <property type="generic name" value="Carindacillin"/>
</dbReference>
<dbReference type="DrugBank" id="DB01327">
    <property type="generic name" value="Cefazolin"/>
</dbReference>
<dbReference type="DrugBank" id="DB01413">
    <property type="generic name" value="Cefepime"/>
</dbReference>
<dbReference type="DrugBank" id="DB00671">
    <property type="generic name" value="Cefixime"/>
</dbReference>
<dbReference type="DrugBank" id="DB01328">
    <property type="generic name" value="Cefonicid"/>
</dbReference>
<dbReference type="DrugBank" id="DB01329">
    <property type="generic name" value="Cefoperazone"/>
</dbReference>
<dbReference type="DrugBank" id="DB06590">
    <property type="generic name" value="Ceftaroline fosamil"/>
</dbReference>
<dbReference type="DrugBank" id="DB00438">
    <property type="generic name" value="Ceftazidime"/>
</dbReference>
<dbReference type="DrugBank" id="DB01415">
    <property type="generic name" value="Ceftibuten"/>
</dbReference>
<dbReference type="DrugBank" id="DB09050">
    <property type="generic name" value="Ceftolozane"/>
</dbReference>
<dbReference type="DrugBank" id="DB01000">
    <property type="generic name" value="Cyclacillin"/>
</dbReference>
<dbReference type="DrugBank" id="DB06211">
    <property type="generic name" value="Doripenem"/>
</dbReference>
<dbReference type="DrugBank" id="DB00303">
    <property type="generic name" value="Ertapenem"/>
</dbReference>
<dbReference type="DrugBank" id="DB01598">
    <property type="generic name" value="Imipenem"/>
</dbReference>
<dbReference type="DrugBank" id="DB00948">
    <property type="generic name" value="Mezlocillin"/>
</dbReference>
<dbReference type="DrugBank" id="DB09320">
    <property type="generic name" value="Procaine benzylpenicillin"/>
</dbReference>
<dbReference type="DrugBank" id="DB16335">
    <property type="generic name" value="Sulopenem etzadroxil"/>
</dbReference>
<dbReference type="DrugCentral" id="P0AD65"/>
<dbReference type="MEROPS" id="X52.001"/>
<dbReference type="jPOST" id="P0AD65"/>
<dbReference type="PaxDb" id="511145-b0635"/>
<dbReference type="EnsemblBacteria" id="AAC73736">
    <property type="protein sequence ID" value="AAC73736"/>
    <property type="gene ID" value="b0635"/>
</dbReference>
<dbReference type="GeneID" id="75205004"/>
<dbReference type="GeneID" id="945240"/>
<dbReference type="KEGG" id="ecj:JW0630"/>
<dbReference type="KEGG" id="eco:b0635"/>
<dbReference type="KEGG" id="ecoc:C3026_03175"/>
<dbReference type="PATRIC" id="fig|1411691.4.peg.1633"/>
<dbReference type="EchoBASE" id="EB0601"/>
<dbReference type="eggNOG" id="COG0768">
    <property type="taxonomic scope" value="Bacteria"/>
</dbReference>
<dbReference type="HOGENOM" id="CLU_009289_1_2_6"/>
<dbReference type="InParanoid" id="P0AD65"/>
<dbReference type="OMA" id="WRFGGWP"/>
<dbReference type="OrthoDB" id="9766847at2"/>
<dbReference type="PhylomeDB" id="P0AD65"/>
<dbReference type="BioCyc" id="EcoCyc:EG10606-MONOMER"/>
<dbReference type="BioCyc" id="MetaCyc:EG10606-MONOMER"/>
<dbReference type="UniPathway" id="UPA00219"/>
<dbReference type="PRO" id="PR:P0AD65"/>
<dbReference type="Proteomes" id="UP000000625">
    <property type="component" value="Chromosome"/>
</dbReference>
<dbReference type="GO" id="GO:0030288">
    <property type="term" value="C:outer membrane-bounded periplasmic space"/>
    <property type="evidence" value="ECO:0000255"/>
    <property type="project" value="EcoCyc"/>
</dbReference>
<dbReference type="GO" id="GO:0005886">
    <property type="term" value="C:plasma membrane"/>
    <property type="evidence" value="ECO:0000314"/>
    <property type="project" value="EcoCyc"/>
</dbReference>
<dbReference type="GO" id="GO:0008658">
    <property type="term" value="F:penicillin binding"/>
    <property type="evidence" value="ECO:0000314"/>
    <property type="project" value="EcoCyc"/>
</dbReference>
<dbReference type="GO" id="GO:0071972">
    <property type="term" value="F:peptidoglycan L,D-transpeptidase activity"/>
    <property type="evidence" value="ECO:0000314"/>
    <property type="project" value="EcoliWiki"/>
</dbReference>
<dbReference type="GO" id="GO:0009002">
    <property type="term" value="F:serine-type D-Ala-D-Ala carboxypeptidase activity"/>
    <property type="evidence" value="ECO:0000314"/>
    <property type="project" value="UniProtKB"/>
</dbReference>
<dbReference type="GO" id="GO:0071555">
    <property type="term" value="P:cell wall organization"/>
    <property type="evidence" value="ECO:0000315"/>
    <property type="project" value="EcoCyc"/>
</dbReference>
<dbReference type="GO" id="GO:0009252">
    <property type="term" value="P:peptidoglycan biosynthetic process"/>
    <property type="evidence" value="ECO:0000314"/>
    <property type="project" value="UniProtKB"/>
</dbReference>
<dbReference type="GO" id="GO:0006508">
    <property type="term" value="P:proteolysis"/>
    <property type="evidence" value="ECO:0007669"/>
    <property type="project" value="UniProtKB-KW"/>
</dbReference>
<dbReference type="GO" id="GO:0008360">
    <property type="term" value="P:regulation of cell shape"/>
    <property type="evidence" value="ECO:0000315"/>
    <property type="project" value="UniProtKB"/>
</dbReference>
<dbReference type="GO" id="GO:0046677">
    <property type="term" value="P:response to antibiotic"/>
    <property type="evidence" value="ECO:0000315"/>
    <property type="project" value="EcoliWiki"/>
</dbReference>
<dbReference type="FunFam" id="3.30.1390.30:FF:000001">
    <property type="entry name" value="Peptidoglycan D,D-transpeptidase MrdA"/>
    <property type="match status" value="1"/>
</dbReference>
<dbReference type="FunFam" id="3.40.710.10:FF:000004">
    <property type="entry name" value="Peptidoglycan D,D-transpeptidase MrdA"/>
    <property type="match status" value="1"/>
</dbReference>
<dbReference type="FunFam" id="3.90.1310.10:FF:000001">
    <property type="entry name" value="Peptidoglycan D,D-transpeptidase MrdA"/>
    <property type="match status" value="1"/>
</dbReference>
<dbReference type="Gene3D" id="3.40.710.10">
    <property type="entry name" value="DD-peptidase/beta-lactamase superfamily"/>
    <property type="match status" value="1"/>
</dbReference>
<dbReference type="Gene3D" id="3.90.1310.10">
    <property type="entry name" value="Penicillin-binding protein 2a (Domain 2)"/>
    <property type="match status" value="1"/>
</dbReference>
<dbReference type="Gene3D" id="3.30.1390.30">
    <property type="entry name" value="Penicillin-binding protein 2a, domain 3"/>
    <property type="match status" value="1"/>
</dbReference>
<dbReference type="HAMAP" id="MF_02081">
    <property type="entry name" value="MrdA_transpept"/>
    <property type="match status" value="1"/>
</dbReference>
<dbReference type="InterPro" id="IPR050515">
    <property type="entry name" value="Bact_Transpept/Beta-Lactamase"/>
</dbReference>
<dbReference type="InterPro" id="IPR012338">
    <property type="entry name" value="Beta-lactam/transpept-like"/>
</dbReference>
<dbReference type="InterPro" id="IPR005311">
    <property type="entry name" value="PBP_dimer"/>
</dbReference>
<dbReference type="InterPro" id="IPR036138">
    <property type="entry name" value="PBP_dimer_sf"/>
</dbReference>
<dbReference type="InterPro" id="IPR001460">
    <property type="entry name" value="PCN-bd_Tpept"/>
</dbReference>
<dbReference type="InterPro" id="IPR017790">
    <property type="entry name" value="Penicillin-binding_protein_2"/>
</dbReference>
<dbReference type="NCBIfam" id="TIGR03423">
    <property type="entry name" value="pbp2_mrdA"/>
    <property type="match status" value="1"/>
</dbReference>
<dbReference type="NCBIfam" id="NF008061">
    <property type="entry name" value="PRK10795.1"/>
    <property type="match status" value="1"/>
</dbReference>
<dbReference type="PANTHER" id="PTHR30627">
    <property type="entry name" value="PEPTIDOGLYCAN D,D-TRANSPEPTIDASE"/>
    <property type="match status" value="1"/>
</dbReference>
<dbReference type="PANTHER" id="PTHR30627:SF2">
    <property type="entry name" value="PEPTIDOGLYCAN D,D-TRANSPEPTIDASE MRDA"/>
    <property type="match status" value="1"/>
</dbReference>
<dbReference type="Pfam" id="PF03717">
    <property type="entry name" value="PBP_dimer"/>
    <property type="match status" value="1"/>
</dbReference>
<dbReference type="Pfam" id="PF00905">
    <property type="entry name" value="Transpeptidase"/>
    <property type="match status" value="1"/>
</dbReference>
<dbReference type="SUPFAM" id="SSF56601">
    <property type="entry name" value="beta-lactamase/transpeptidase-like"/>
    <property type="match status" value="1"/>
</dbReference>
<dbReference type="SUPFAM" id="SSF56519">
    <property type="entry name" value="Penicillin binding protein dimerisation domain"/>
    <property type="match status" value="1"/>
</dbReference>
<comment type="function">
    <text evidence="2 3 4">Catalyzes cross-linking of the peptidoglycan cell wall (PubMed:3009484). Responsible for the determination of the rod shape of the cell (PubMed:1103132). Is probably required for lateral peptidoglycan synthesis and maintenance of the correct diameter during lateral and centripetal growth (PubMed:12519203).</text>
</comment>
<comment type="catalytic activity">
    <reaction evidence="1 4 5">
        <text>Preferential cleavage: (Ac)2-L-Lys-D-Ala-|-D-Ala. Also transpeptidation of peptidyl-alanyl moieties that are N-acyl substituents of D-alanine.</text>
        <dbReference type="EC" id="3.4.16.4"/>
    </reaction>
</comment>
<comment type="activity regulation">
    <text evidence="2 4 5">Inhibited by mecillinam and benzylpenicillin (PubMed:1103132, PubMed:3009484). Inhibited by diazabicyclooctane (DBO)-based avibactam and CPD4, with IC(50) values of 0.59 uM and 0.01 uM, respectively (PubMed:30995398).</text>
</comment>
<comment type="pathway">
    <text evidence="1 4 7 16">Cell wall biogenesis; peptidoglycan biosynthesis.</text>
</comment>
<comment type="interaction">
    <interactant intactId="EBI-1124032">
        <id>P0AD65</id>
    </interactant>
    <interactant intactId="EBI-1126191">
        <id>P02918</id>
        <label>mrcA</label>
    </interactant>
    <organismsDiffer>false</organismsDiffer>
    <experiments>5</experiments>
</comment>
<comment type="subcellular location">
    <subcellularLocation>
        <location evidence="1 2 4 17">Cell inner membrane</location>
        <topology evidence="1 17">Single-pass membrane protein</topology>
    </subcellularLocation>
    <text evidence="3">Localizes preferentially in the lateral wall and at mid-cell in comparison with the old cell pole. Localization at mid-cell is dependent on active FtsI.</text>
</comment>
<comment type="disruption phenotype">
    <text evidence="8">Temperature-sensitive mutants grow as normal rods at 30 degrees Celsius but grow and divide as cocci during prolonged culturing at 42 degrees Celsius.</text>
</comment>
<comment type="similarity">
    <text evidence="1 15">Belongs to the transpeptidase family. MrdA subfamily.</text>
</comment>
<proteinExistence type="evidence at protein level"/>
<feature type="chain" id="PRO_0000195444" description="Peptidoglycan D,D-transpeptidase MrdA">
    <location>
        <begin position="1"/>
        <end position="633"/>
    </location>
</feature>
<feature type="topological domain" description="Cytoplasmic" evidence="17">
    <location>
        <begin position="1"/>
        <end position="21"/>
    </location>
</feature>
<feature type="transmembrane region" description="Helical" evidence="1">
    <location>
        <begin position="22"/>
        <end position="42"/>
    </location>
</feature>
<feature type="topological domain" description="Periplasmic" evidence="17">
    <location>
        <begin position="43"/>
        <end position="633"/>
    </location>
</feature>
<feature type="active site" description="Acyl-ester intermediate" evidence="1 5 6 7">
    <location>
        <position position="330"/>
    </location>
</feature>
<feature type="mutagenesis site" description="No longer binds fluorescent penicillin mimic bocellin." evidence="7">
    <original>S</original>
    <variation>A</variation>
    <location>
        <position position="330"/>
    </location>
</feature>
<feature type="mutagenesis site" description="No longer binds penicillin." evidence="6">
    <original>S</original>
    <variation>C</variation>
    <location>
        <position position="330"/>
    </location>
</feature>
<feature type="helix" evidence="24">
    <location>
        <begin position="12"/>
        <end position="43"/>
    </location>
</feature>
<feature type="turn" evidence="24">
    <location>
        <begin position="44"/>
        <end position="46"/>
    </location>
</feature>
<feature type="helix" evidence="24">
    <location>
        <begin position="47"/>
        <end position="49"/>
    </location>
</feature>
<feature type="strand" evidence="23">
    <location>
        <begin position="59"/>
        <end position="64"/>
    </location>
</feature>
<feature type="strand" evidence="23">
    <location>
        <begin position="78"/>
        <end position="90"/>
    </location>
</feature>
<feature type="helix" evidence="23">
    <location>
        <begin position="92"/>
        <end position="94"/>
    </location>
</feature>
<feature type="helix" evidence="23">
    <location>
        <begin position="98"/>
        <end position="109"/>
    </location>
</feature>
<feature type="helix" evidence="23">
    <location>
        <begin position="113"/>
        <end position="124"/>
    </location>
</feature>
<feature type="strand" evidence="24">
    <location>
        <begin position="128"/>
        <end position="130"/>
    </location>
</feature>
<feature type="strand" evidence="23">
    <location>
        <begin position="132"/>
        <end position="138"/>
    </location>
</feature>
<feature type="helix" evidence="23">
    <location>
        <begin position="140"/>
        <end position="149"/>
    </location>
</feature>
<feature type="helix" evidence="23">
    <location>
        <begin position="150"/>
        <end position="152"/>
    </location>
</feature>
<feature type="strand" evidence="23">
    <location>
        <begin position="156"/>
        <end position="165"/>
    </location>
</feature>
<feature type="helix" evidence="23">
    <location>
        <begin position="169"/>
        <end position="172"/>
    </location>
</feature>
<feature type="helix" evidence="23">
    <location>
        <begin position="173"/>
        <end position="176"/>
    </location>
</feature>
<feature type="strand" evidence="23">
    <location>
        <begin position="179"/>
        <end position="181"/>
    </location>
</feature>
<feature type="helix" evidence="23">
    <location>
        <begin position="184"/>
        <end position="192"/>
    </location>
</feature>
<feature type="helix" evidence="23">
    <location>
        <begin position="196"/>
        <end position="199"/>
    </location>
</feature>
<feature type="strand" evidence="23">
    <location>
        <begin position="204"/>
        <end position="206"/>
    </location>
</feature>
<feature type="helix" evidence="23">
    <location>
        <begin position="209"/>
        <end position="213"/>
    </location>
</feature>
<feature type="helix" evidence="23">
    <location>
        <begin position="215"/>
        <end position="219"/>
    </location>
</feature>
<feature type="strand" evidence="23">
    <location>
        <begin position="223"/>
        <end position="229"/>
    </location>
</feature>
<feature type="helix" evidence="23">
    <location>
        <begin position="231"/>
        <end position="233"/>
    </location>
</feature>
<feature type="strand" evidence="23">
    <location>
        <begin position="235"/>
        <end position="242"/>
    </location>
</feature>
<feature type="strand" evidence="23">
    <location>
        <begin position="250"/>
        <end position="253"/>
    </location>
</feature>
<feature type="helix" evidence="23">
    <location>
        <begin position="256"/>
        <end position="266"/>
    </location>
</feature>
<feature type="strand" evidence="23">
    <location>
        <begin position="271"/>
        <end position="276"/>
    </location>
</feature>
<feature type="turn" evidence="23">
    <location>
        <begin position="278"/>
        <end position="280"/>
    </location>
</feature>
<feature type="strand" evidence="23">
    <location>
        <begin position="282"/>
        <end position="290"/>
    </location>
</feature>
<feature type="helix" evidence="23">
    <location>
        <begin position="295"/>
        <end position="298"/>
    </location>
</feature>
<feature type="helix" evidence="23">
    <location>
        <begin position="303"/>
        <end position="310"/>
    </location>
</feature>
<feature type="helix" evidence="23">
    <location>
        <begin position="320"/>
        <end position="323"/>
    </location>
</feature>
<feature type="helix" evidence="23">
    <location>
        <begin position="329"/>
        <end position="332"/>
    </location>
</feature>
<feature type="helix" evidence="23">
    <location>
        <begin position="333"/>
        <end position="342"/>
    </location>
</feature>
<feature type="strand" evidence="23">
    <location>
        <begin position="352"/>
        <end position="359"/>
    </location>
</feature>
<feature type="strand" evidence="23">
    <location>
        <begin position="366"/>
        <end position="368"/>
    </location>
</feature>
<feature type="strand" evidence="23">
    <location>
        <begin position="376"/>
        <end position="378"/>
    </location>
</feature>
<feature type="helix" evidence="23">
    <location>
        <begin position="380"/>
        <end position="385"/>
    </location>
</feature>
<feature type="helix" evidence="23">
    <location>
        <begin position="390"/>
        <end position="410"/>
    </location>
</feature>
<feature type="turn" evidence="23">
    <location>
        <begin position="411"/>
        <end position="414"/>
    </location>
</feature>
<feature type="helix" evidence="23">
    <location>
        <begin position="432"/>
        <end position="439"/>
    </location>
</feature>
<feature type="helix" evidence="23">
    <location>
        <begin position="445"/>
        <end position="451"/>
    </location>
</feature>
<feature type="turn" evidence="23">
    <location>
        <begin position="452"/>
        <end position="454"/>
    </location>
</feature>
<feature type="helix" evidence="23">
    <location>
        <begin position="462"/>
        <end position="473"/>
    </location>
</feature>
<feature type="turn" evidence="23">
    <location>
        <begin position="474"/>
        <end position="476"/>
    </location>
</feature>
<feature type="strand" evidence="23">
    <location>
        <begin position="484"/>
        <end position="487"/>
    </location>
</feature>
<feature type="strand" evidence="23">
    <location>
        <begin position="489"/>
        <end position="491"/>
    </location>
</feature>
<feature type="strand" evidence="22">
    <location>
        <begin position="507"/>
        <end position="510"/>
    </location>
</feature>
<feature type="helix" evidence="23">
    <location>
        <begin position="511"/>
        <end position="524"/>
    </location>
</feature>
<feature type="helix" evidence="23">
    <location>
        <begin position="531"/>
        <end position="534"/>
    </location>
</feature>
<feature type="strand" evidence="23">
    <location>
        <begin position="542"/>
        <end position="548"/>
    </location>
</feature>
<feature type="strand" evidence="23">
    <location>
        <begin position="571"/>
        <end position="578"/>
    </location>
</feature>
<feature type="strand" evidence="23">
    <location>
        <begin position="580"/>
        <end position="582"/>
    </location>
</feature>
<feature type="strand" evidence="23">
    <location>
        <begin position="585"/>
        <end position="591"/>
    </location>
</feature>
<feature type="helix" evidence="23">
    <location>
        <begin position="592"/>
        <end position="594"/>
    </location>
</feature>
<feature type="strand" evidence="23">
    <location>
        <begin position="596"/>
        <end position="598"/>
    </location>
</feature>
<feature type="helix" evidence="23">
    <location>
        <begin position="600"/>
        <end position="612"/>
    </location>
</feature>